<protein>
    <recommendedName>
        <fullName evidence="6">PTS system galactose-specific EIIA component</fullName>
    </recommendedName>
</protein>
<gene>
    <name evidence="5" type="primary">ptcA</name>
    <name evidence="7" type="ordered locus">llmg_0438</name>
</gene>
<reference key="1">
    <citation type="journal article" date="2007" name="J. Bacteriol.">
        <title>The complete genome sequence of the lactic acid bacterial paradigm Lactococcus lactis subsp. cremoris MG1363.</title>
        <authorList>
            <person name="Wegmann U."/>
            <person name="O'Connell-Motherway M."/>
            <person name="Zomer A."/>
            <person name="Buist G."/>
            <person name="Shearman C."/>
            <person name="Canchaya C."/>
            <person name="Ventura M."/>
            <person name="Goesmann A."/>
            <person name="Gasson M.J."/>
            <person name="Kuipers O.P."/>
            <person name="van Sinderen D."/>
            <person name="Kok J."/>
        </authorList>
    </citation>
    <scope>NUCLEOTIDE SEQUENCE [LARGE SCALE GENOMIC DNA]</scope>
    <source>
        <strain>MG1363</strain>
    </source>
</reference>
<reference key="2">
    <citation type="journal article" date="2018" name="Front. Microbiol.">
        <title>Further elucidation of galactose utilization in Lactococcus lactis MG1363.</title>
        <authorList>
            <person name="Solopova A."/>
            <person name="Bachmann H."/>
            <person name="Teusink B."/>
            <person name="Kok J."/>
            <person name="Kuipers O.P."/>
        </authorList>
    </citation>
    <scope>FUNCTION</scope>
    <scope>INDUCTION</scope>
    <source>
        <strain>MG1363</strain>
    </source>
</reference>
<evidence type="ECO:0000250" key="1">
    <source>
        <dbReference type="UniProtKB" id="P23532"/>
    </source>
</evidence>
<evidence type="ECO:0000250" key="2">
    <source>
        <dbReference type="UniProtKB" id="P69791"/>
    </source>
</evidence>
<evidence type="ECO:0000255" key="3">
    <source>
        <dbReference type="PROSITE-ProRule" id="PRU00418"/>
    </source>
</evidence>
<evidence type="ECO:0000269" key="4">
    <source>
    </source>
</evidence>
<evidence type="ECO:0000303" key="5">
    <source>
    </source>
</evidence>
<evidence type="ECO:0000305" key="6"/>
<evidence type="ECO:0000312" key="7">
    <source>
        <dbReference type="EMBL" id="CAL97042.1"/>
    </source>
</evidence>
<proteinExistence type="evidence at transcript level"/>
<feature type="chain" id="PRO_0000446881" description="PTS system galactose-specific EIIA component">
    <location>
        <begin position="1"/>
        <end position="116"/>
    </location>
</feature>
<feature type="domain" description="PTS EIIA type-3" evidence="3">
    <location>
        <begin position="11"/>
        <end position="109"/>
    </location>
</feature>
<feature type="active site" description="Tele-phosphohistidine intermediate" evidence="1">
    <location>
        <position position="85"/>
    </location>
</feature>
<feature type="binding site" evidence="1">
    <location>
        <position position="88"/>
    </location>
    <ligand>
        <name>Mg(2+)</name>
        <dbReference type="ChEBI" id="CHEBI:18420"/>
        <note>ligand shared between all trimeric partners</note>
    </ligand>
</feature>
<feature type="modified residue" description="Phosphohistidine; by HPr" evidence="3">
    <location>
        <position position="85"/>
    </location>
</feature>
<name>PTCA_LACLM</name>
<sequence>MTDKYENPTSDDYMGVVMGIIMSGGNAKGLAFQAIQQAKDGKFAEAESSLNEASEQLREAHDVQTDLLTRLAQGEKIGWNLYMVHAQDHLMNAITFKDLAVEVVGQERRLQALENK</sequence>
<accession>A2RIE7</accession>
<keyword id="KW-0460">Magnesium</keyword>
<keyword id="KW-0479">Metal-binding</keyword>
<keyword id="KW-0597">Phosphoprotein</keyword>
<keyword id="KW-0598">Phosphotransferase system</keyword>
<keyword id="KW-0762">Sugar transport</keyword>
<keyword id="KW-0808">Transferase</keyword>
<keyword id="KW-0813">Transport</keyword>
<comment type="function">
    <text evidence="2 4">The phosphoenolpyruvate-dependent sugar phosphotransferase system (sugar PTS), a major carbohydrate active transport system, catalyzes the phosphorylation of incoming sugar substrates concomitantly with their translocation across the cell membrane (By similarity). Involved in galactose transport with PtcB and Lmg_0963 (PubMed:30123211).</text>
</comment>
<comment type="cofactor">
    <cofactor evidence="1">
        <name>Mg(2+)</name>
        <dbReference type="ChEBI" id="CHEBI:18420"/>
    </cofactor>
    <text evidence="1">Binds 1 Mg(2+) ion per trimer.</text>
</comment>
<comment type="subunit">
    <text evidence="1">Homotrimer.</text>
</comment>
<comment type="induction">
    <text evidence="4">Induced by growth on galactose.</text>
</comment>
<comment type="domain">
    <text evidence="3">The PTS EIIA type-3 domain is phosphorylated by phospho-HPr on a histidyl residue. Then, it transfers the phosphoryl group to the PTS EIIB type-3 domain.</text>
</comment>
<organism>
    <name type="scientific">Lactococcus lactis subsp. cremoris (strain MG1363)</name>
    <dbReference type="NCBI Taxonomy" id="416870"/>
    <lineage>
        <taxon>Bacteria</taxon>
        <taxon>Bacillati</taxon>
        <taxon>Bacillota</taxon>
        <taxon>Bacilli</taxon>
        <taxon>Lactobacillales</taxon>
        <taxon>Streptococcaceae</taxon>
        <taxon>Lactococcus</taxon>
        <taxon>Lactococcus cremoris subsp. cremoris</taxon>
    </lineage>
</organism>
<dbReference type="EMBL" id="AM406671">
    <property type="protein sequence ID" value="CAL97042.1"/>
    <property type="molecule type" value="Genomic_DNA"/>
</dbReference>
<dbReference type="RefSeq" id="WP_011675489.1">
    <property type="nucleotide sequence ID" value="NC_009004.1"/>
</dbReference>
<dbReference type="SMR" id="A2RIE7"/>
<dbReference type="STRING" id="416870.llmg_0438"/>
<dbReference type="GeneID" id="61108738"/>
<dbReference type="KEGG" id="llm:llmg_0438"/>
<dbReference type="eggNOG" id="COG1447">
    <property type="taxonomic scope" value="Bacteria"/>
</dbReference>
<dbReference type="HOGENOM" id="CLU_152490_0_0_9"/>
<dbReference type="OrthoDB" id="350602at2"/>
<dbReference type="PhylomeDB" id="A2RIE7"/>
<dbReference type="Proteomes" id="UP000000364">
    <property type="component" value="Chromosome"/>
</dbReference>
<dbReference type="GO" id="GO:0046872">
    <property type="term" value="F:metal ion binding"/>
    <property type="evidence" value="ECO:0007669"/>
    <property type="project" value="UniProtKB-KW"/>
</dbReference>
<dbReference type="GO" id="GO:0016740">
    <property type="term" value="F:transferase activity"/>
    <property type="evidence" value="ECO:0007669"/>
    <property type="project" value="UniProtKB-KW"/>
</dbReference>
<dbReference type="GO" id="GO:0009401">
    <property type="term" value="P:phosphoenolpyruvate-dependent sugar phosphotransferase system"/>
    <property type="evidence" value="ECO:0007669"/>
    <property type="project" value="UniProtKB-KW"/>
</dbReference>
<dbReference type="CDD" id="cd00215">
    <property type="entry name" value="PTS_IIA_lac"/>
    <property type="match status" value="1"/>
</dbReference>
<dbReference type="Gene3D" id="1.20.58.80">
    <property type="entry name" value="Phosphotransferase system, lactose/cellobiose-type IIA subunit"/>
    <property type="match status" value="1"/>
</dbReference>
<dbReference type="InterPro" id="IPR003188">
    <property type="entry name" value="PTS_IIA_lac/cel"/>
</dbReference>
<dbReference type="InterPro" id="IPR036542">
    <property type="entry name" value="PTS_IIA_lac/cel_sf"/>
</dbReference>
<dbReference type="PANTHER" id="PTHR34382">
    <property type="entry name" value="PTS SYSTEM N,N'-DIACETYLCHITOBIOSE-SPECIFIC EIIA COMPONENT"/>
    <property type="match status" value="1"/>
</dbReference>
<dbReference type="PANTHER" id="PTHR34382:SF7">
    <property type="entry name" value="PTS SYSTEM N,N'-DIACETYLCHITOBIOSE-SPECIFIC EIIA COMPONENT"/>
    <property type="match status" value="1"/>
</dbReference>
<dbReference type="Pfam" id="PF02255">
    <property type="entry name" value="PTS_IIA"/>
    <property type="match status" value="1"/>
</dbReference>
<dbReference type="PIRSF" id="PIRSF000699">
    <property type="entry name" value="PTS_IILac_III"/>
    <property type="match status" value="1"/>
</dbReference>
<dbReference type="SUPFAM" id="SSF46973">
    <property type="entry name" value="Enzyme IIa from lactose specific PTS, IIa-lac"/>
    <property type="match status" value="1"/>
</dbReference>
<dbReference type="PROSITE" id="PS51095">
    <property type="entry name" value="PTS_EIIA_TYPE_3"/>
    <property type="match status" value="1"/>
</dbReference>